<keyword id="KW-0012">Acyltransferase</keyword>
<keyword id="KW-0133">Cell shape</keyword>
<keyword id="KW-0961">Cell wall biogenesis/degradation</keyword>
<keyword id="KW-0963">Cytoplasm</keyword>
<keyword id="KW-0460">Magnesium</keyword>
<keyword id="KW-0479">Metal-binding</keyword>
<keyword id="KW-0511">Multifunctional enzyme</keyword>
<keyword id="KW-0548">Nucleotidyltransferase</keyword>
<keyword id="KW-0573">Peptidoglycan synthesis</keyword>
<keyword id="KW-0677">Repeat</keyword>
<keyword id="KW-0808">Transferase</keyword>
<proteinExistence type="inferred from homology"/>
<sequence>MTNYAIILAAGKGTRMTSDLPKVLHKVSGLTMLEHGFRSGKAISPEKSVTVIGHKSKMVRGGLADQSAFVHQTEQLGTGHAVMMAETQLEGLEGHTLVIAGDTPLITGESLKSLIDFHVNHKNVATILTATAQDSFGYGRIVRNKNGEVIKIVEQKDANEYEQQLKEINTGTYVFDNKRLFEALKCITTNNAQGEYYLTDVVAIFRANKEKVGAYILRDFNESLGVNDRVALATAETVMRQRITQKHMVNGVTFHNPETVYIESDVEIAPDVLIEGNVTLKGRTHIGSGTVLTNGTYIVDSEIGQGSIITNSMIESSVLAAGVTVGPYAHLRPGTTLDREVHIGNFVEVKGSHIGEKTKAGHLTYIGNAQVGSSVNVGAGTITVNYDGQNKYETVIGDHAFIGSNSTLIAPLEIGDHALTAAGSTISKTVPIDSIAIGRSRQVTKEGYAKRLAHHPSRSK</sequence>
<organism>
    <name type="scientific">Streptococcus pyogenes serotype M49 (strain NZ131)</name>
    <dbReference type="NCBI Taxonomy" id="471876"/>
    <lineage>
        <taxon>Bacteria</taxon>
        <taxon>Bacillati</taxon>
        <taxon>Bacillota</taxon>
        <taxon>Bacilli</taxon>
        <taxon>Lactobacillales</taxon>
        <taxon>Streptococcaceae</taxon>
        <taxon>Streptococcus</taxon>
    </lineage>
</organism>
<protein>
    <recommendedName>
        <fullName evidence="1">Bifunctional protein GlmU</fullName>
    </recommendedName>
    <domain>
        <recommendedName>
            <fullName evidence="1">UDP-N-acetylglucosamine pyrophosphorylase</fullName>
            <ecNumber evidence="1">2.7.7.23</ecNumber>
        </recommendedName>
        <alternativeName>
            <fullName evidence="1">N-acetylglucosamine-1-phosphate uridyltransferase</fullName>
        </alternativeName>
    </domain>
    <domain>
        <recommendedName>
            <fullName evidence="1">Glucosamine-1-phosphate N-acetyltransferase</fullName>
            <ecNumber evidence="1">2.3.1.157</ecNumber>
        </recommendedName>
    </domain>
</protein>
<reference key="1">
    <citation type="journal article" date="2008" name="J. Bacteriol.">
        <title>Genome sequence of a nephritogenic and highly transformable M49 strain of Streptococcus pyogenes.</title>
        <authorList>
            <person name="McShan W.M."/>
            <person name="Ferretti J.J."/>
            <person name="Karasawa T."/>
            <person name="Suvorov A.N."/>
            <person name="Lin S."/>
            <person name="Qin B."/>
            <person name="Jia H."/>
            <person name="Kenton S."/>
            <person name="Najar F."/>
            <person name="Wu H."/>
            <person name="Scott J."/>
            <person name="Roe B.A."/>
            <person name="Savic D.J."/>
        </authorList>
    </citation>
    <scope>NUCLEOTIDE SEQUENCE [LARGE SCALE GENOMIC DNA]</scope>
    <source>
        <strain>NZ131</strain>
    </source>
</reference>
<gene>
    <name evidence="1" type="primary">glmU</name>
    <name type="ordered locus">Spy49_0375</name>
</gene>
<comment type="function">
    <text evidence="1">Catalyzes the last two sequential reactions in the de novo biosynthetic pathway for UDP-N-acetylglucosamine (UDP-GlcNAc). The C-terminal domain catalyzes the transfer of acetyl group from acetyl coenzyme A to glucosamine-1-phosphate (GlcN-1-P) to produce N-acetylglucosamine-1-phosphate (GlcNAc-1-P), which is converted into UDP-GlcNAc by the transfer of uridine 5-monophosphate (from uridine 5-triphosphate), a reaction catalyzed by the N-terminal domain.</text>
</comment>
<comment type="catalytic activity">
    <reaction evidence="1">
        <text>alpha-D-glucosamine 1-phosphate + acetyl-CoA = N-acetyl-alpha-D-glucosamine 1-phosphate + CoA + H(+)</text>
        <dbReference type="Rhea" id="RHEA:13725"/>
        <dbReference type="ChEBI" id="CHEBI:15378"/>
        <dbReference type="ChEBI" id="CHEBI:57287"/>
        <dbReference type="ChEBI" id="CHEBI:57288"/>
        <dbReference type="ChEBI" id="CHEBI:57776"/>
        <dbReference type="ChEBI" id="CHEBI:58516"/>
        <dbReference type="EC" id="2.3.1.157"/>
    </reaction>
</comment>
<comment type="catalytic activity">
    <reaction evidence="1">
        <text>N-acetyl-alpha-D-glucosamine 1-phosphate + UTP + H(+) = UDP-N-acetyl-alpha-D-glucosamine + diphosphate</text>
        <dbReference type="Rhea" id="RHEA:13509"/>
        <dbReference type="ChEBI" id="CHEBI:15378"/>
        <dbReference type="ChEBI" id="CHEBI:33019"/>
        <dbReference type="ChEBI" id="CHEBI:46398"/>
        <dbReference type="ChEBI" id="CHEBI:57705"/>
        <dbReference type="ChEBI" id="CHEBI:57776"/>
        <dbReference type="EC" id="2.7.7.23"/>
    </reaction>
</comment>
<comment type="cofactor">
    <cofactor evidence="1">
        <name>Mg(2+)</name>
        <dbReference type="ChEBI" id="CHEBI:18420"/>
    </cofactor>
    <text evidence="1">Binds 1 Mg(2+) ion per subunit.</text>
</comment>
<comment type="pathway">
    <text evidence="1">Nucleotide-sugar biosynthesis; UDP-N-acetyl-alpha-D-glucosamine biosynthesis; N-acetyl-alpha-D-glucosamine 1-phosphate from alpha-D-glucosamine 6-phosphate (route II): step 2/2.</text>
</comment>
<comment type="pathway">
    <text evidence="1">Nucleotide-sugar biosynthesis; UDP-N-acetyl-alpha-D-glucosamine biosynthesis; UDP-N-acetyl-alpha-D-glucosamine from N-acetyl-alpha-D-glucosamine 1-phosphate: step 1/1.</text>
</comment>
<comment type="pathway">
    <text evidence="1">Bacterial outer membrane biogenesis; LPS lipid A biosynthesis.</text>
</comment>
<comment type="subunit">
    <text evidence="1">Homotrimer.</text>
</comment>
<comment type="subcellular location">
    <subcellularLocation>
        <location evidence="1">Cytoplasm</location>
    </subcellularLocation>
</comment>
<comment type="similarity">
    <text evidence="1">In the N-terminal section; belongs to the N-acetylglucosamine-1-phosphate uridyltransferase family.</text>
</comment>
<comment type="similarity">
    <text evidence="1">In the C-terminal section; belongs to the transferase hexapeptide repeat family.</text>
</comment>
<evidence type="ECO:0000255" key="1">
    <source>
        <dbReference type="HAMAP-Rule" id="MF_01631"/>
    </source>
</evidence>
<feature type="chain" id="PRO_1000186499" description="Bifunctional protein GlmU">
    <location>
        <begin position="1"/>
        <end position="460"/>
    </location>
</feature>
<feature type="region of interest" description="Pyrophosphorylase" evidence="1">
    <location>
        <begin position="1"/>
        <end position="229"/>
    </location>
</feature>
<feature type="region of interest" description="Linker" evidence="1">
    <location>
        <begin position="230"/>
        <end position="250"/>
    </location>
</feature>
<feature type="region of interest" description="N-acetyltransferase" evidence="1">
    <location>
        <begin position="251"/>
        <end position="460"/>
    </location>
</feature>
<feature type="active site" description="Proton acceptor" evidence="1">
    <location>
        <position position="362"/>
    </location>
</feature>
<feature type="binding site" evidence="1">
    <location>
        <begin position="8"/>
        <end position="11"/>
    </location>
    <ligand>
        <name>UDP-N-acetyl-alpha-D-glucosamine</name>
        <dbReference type="ChEBI" id="CHEBI:57705"/>
    </ligand>
</feature>
<feature type="binding site" evidence="1">
    <location>
        <position position="22"/>
    </location>
    <ligand>
        <name>UDP-N-acetyl-alpha-D-glucosamine</name>
        <dbReference type="ChEBI" id="CHEBI:57705"/>
    </ligand>
</feature>
<feature type="binding site" evidence="1">
    <location>
        <position position="72"/>
    </location>
    <ligand>
        <name>UDP-N-acetyl-alpha-D-glucosamine</name>
        <dbReference type="ChEBI" id="CHEBI:57705"/>
    </ligand>
</feature>
<feature type="binding site" evidence="1">
    <location>
        <begin position="77"/>
        <end position="78"/>
    </location>
    <ligand>
        <name>UDP-N-acetyl-alpha-D-glucosamine</name>
        <dbReference type="ChEBI" id="CHEBI:57705"/>
    </ligand>
</feature>
<feature type="binding site" evidence="1">
    <location>
        <position position="102"/>
    </location>
    <ligand>
        <name>Mg(2+)</name>
        <dbReference type="ChEBI" id="CHEBI:18420"/>
    </ligand>
</feature>
<feature type="binding site" evidence="1">
    <location>
        <position position="139"/>
    </location>
    <ligand>
        <name>UDP-N-acetyl-alpha-D-glucosamine</name>
        <dbReference type="ChEBI" id="CHEBI:57705"/>
    </ligand>
</feature>
<feature type="binding site" evidence="1">
    <location>
        <position position="154"/>
    </location>
    <ligand>
        <name>UDP-N-acetyl-alpha-D-glucosamine</name>
        <dbReference type="ChEBI" id="CHEBI:57705"/>
    </ligand>
</feature>
<feature type="binding site" evidence="1">
    <location>
        <position position="169"/>
    </location>
    <ligand>
        <name>UDP-N-acetyl-alpha-D-glucosamine</name>
        <dbReference type="ChEBI" id="CHEBI:57705"/>
    </ligand>
</feature>
<feature type="binding site" evidence="1">
    <location>
        <position position="227"/>
    </location>
    <ligand>
        <name>Mg(2+)</name>
        <dbReference type="ChEBI" id="CHEBI:18420"/>
    </ligand>
</feature>
<feature type="binding site" evidence="1">
    <location>
        <position position="227"/>
    </location>
    <ligand>
        <name>UDP-N-acetyl-alpha-D-glucosamine</name>
        <dbReference type="ChEBI" id="CHEBI:57705"/>
    </ligand>
</feature>
<feature type="binding site" evidence="1">
    <location>
        <position position="332"/>
    </location>
    <ligand>
        <name>UDP-N-acetyl-alpha-D-glucosamine</name>
        <dbReference type="ChEBI" id="CHEBI:57705"/>
    </ligand>
</feature>
<feature type="binding site" evidence="1">
    <location>
        <position position="350"/>
    </location>
    <ligand>
        <name>UDP-N-acetyl-alpha-D-glucosamine</name>
        <dbReference type="ChEBI" id="CHEBI:57705"/>
    </ligand>
</feature>
<feature type="binding site" evidence="1">
    <location>
        <position position="365"/>
    </location>
    <ligand>
        <name>UDP-N-acetyl-alpha-D-glucosamine</name>
        <dbReference type="ChEBI" id="CHEBI:57705"/>
    </ligand>
</feature>
<feature type="binding site" evidence="1">
    <location>
        <position position="376"/>
    </location>
    <ligand>
        <name>UDP-N-acetyl-alpha-D-glucosamine</name>
        <dbReference type="ChEBI" id="CHEBI:57705"/>
    </ligand>
</feature>
<feature type="binding site" evidence="1">
    <location>
        <position position="379"/>
    </location>
    <ligand>
        <name>acetyl-CoA</name>
        <dbReference type="ChEBI" id="CHEBI:57288"/>
    </ligand>
</feature>
<feature type="binding site" evidence="1">
    <location>
        <begin position="385"/>
        <end position="386"/>
    </location>
    <ligand>
        <name>acetyl-CoA</name>
        <dbReference type="ChEBI" id="CHEBI:57288"/>
    </ligand>
</feature>
<feature type="binding site" evidence="1">
    <location>
        <position position="404"/>
    </location>
    <ligand>
        <name>acetyl-CoA</name>
        <dbReference type="ChEBI" id="CHEBI:57288"/>
    </ligand>
</feature>
<feature type="binding site" evidence="1">
    <location>
        <position position="422"/>
    </location>
    <ligand>
        <name>acetyl-CoA</name>
        <dbReference type="ChEBI" id="CHEBI:57288"/>
    </ligand>
</feature>
<feature type="binding site" evidence="1">
    <location>
        <position position="439"/>
    </location>
    <ligand>
        <name>acetyl-CoA</name>
        <dbReference type="ChEBI" id="CHEBI:57288"/>
    </ligand>
</feature>
<accession>B5XK49</accession>
<name>GLMU_STRPZ</name>
<dbReference type="EC" id="2.7.7.23" evidence="1"/>
<dbReference type="EC" id="2.3.1.157" evidence="1"/>
<dbReference type="EMBL" id="CP000829">
    <property type="protein sequence ID" value="ACI60711.1"/>
    <property type="molecule type" value="Genomic_DNA"/>
</dbReference>
<dbReference type="SMR" id="B5XK49"/>
<dbReference type="KEGG" id="soz:Spy49_0375"/>
<dbReference type="HOGENOM" id="CLU_029499_15_2_9"/>
<dbReference type="UniPathway" id="UPA00113">
    <property type="reaction ID" value="UER00532"/>
</dbReference>
<dbReference type="UniPathway" id="UPA00113">
    <property type="reaction ID" value="UER00533"/>
</dbReference>
<dbReference type="UniPathway" id="UPA00973"/>
<dbReference type="Proteomes" id="UP000001039">
    <property type="component" value="Chromosome"/>
</dbReference>
<dbReference type="GO" id="GO:0005737">
    <property type="term" value="C:cytoplasm"/>
    <property type="evidence" value="ECO:0007669"/>
    <property type="project" value="UniProtKB-SubCell"/>
</dbReference>
<dbReference type="GO" id="GO:0016020">
    <property type="term" value="C:membrane"/>
    <property type="evidence" value="ECO:0007669"/>
    <property type="project" value="GOC"/>
</dbReference>
<dbReference type="GO" id="GO:0019134">
    <property type="term" value="F:glucosamine-1-phosphate N-acetyltransferase activity"/>
    <property type="evidence" value="ECO:0007669"/>
    <property type="project" value="UniProtKB-UniRule"/>
</dbReference>
<dbReference type="GO" id="GO:0000287">
    <property type="term" value="F:magnesium ion binding"/>
    <property type="evidence" value="ECO:0007669"/>
    <property type="project" value="UniProtKB-UniRule"/>
</dbReference>
<dbReference type="GO" id="GO:0003977">
    <property type="term" value="F:UDP-N-acetylglucosamine diphosphorylase activity"/>
    <property type="evidence" value="ECO:0007669"/>
    <property type="project" value="UniProtKB-UniRule"/>
</dbReference>
<dbReference type="GO" id="GO:0000902">
    <property type="term" value="P:cell morphogenesis"/>
    <property type="evidence" value="ECO:0007669"/>
    <property type="project" value="UniProtKB-UniRule"/>
</dbReference>
<dbReference type="GO" id="GO:0071555">
    <property type="term" value="P:cell wall organization"/>
    <property type="evidence" value="ECO:0007669"/>
    <property type="project" value="UniProtKB-KW"/>
</dbReference>
<dbReference type="GO" id="GO:0009245">
    <property type="term" value="P:lipid A biosynthetic process"/>
    <property type="evidence" value="ECO:0007669"/>
    <property type="project" value="UniProtKB-UniRule"/>
</dbReference>
<dbReference type="GO" id="GO:0009252">
    <property type="term" value="P:peptidoglycan biosynthetic process"/>
    <property type="evidence" value="ECO:0007669"/>
    <property type="project" value="UniProtKB-UniRule"/>
</dbReference>
<dbReference type="GO" id="GO:0008360">
    <property type="term" value="P:regulation of cell shape"/>
    <property type="evidence" value="ECO:0007669"/>
    <property type="project" value="UniProtKB-KW"/>
</dbReference>
<dbReference type="GO" id="GO:0006048">
    <property type="term" value="P:UDP-N-acetylglucosamine biosynthetic process"/>
    <property type="evidence" value="ECO:0007669"/>
    <property type="project" value="UniProtKB-UniPathway"/>
</dbReference>
<dbReference type="CDD" id="cd02540">
    <property type="entry name" value="GT2_GlmU_N_bac"/>
    <property type="match status" value="1"/>
</dbReference>
<dbReference type="CDD" id="cd03353">
    <property type="entry name" value="LbH_GlmU_C"/>
    <property type="match status" value="1"/>
</dbReference>
<dbReference type="Gene3D" id="2.160.10.10">
    <property type="entry name" value="Hexapeptide repeat proteins"/>
    <property type="match status" value="1"/>
</dbReference>
<dbReference type="Gene3D" id="3.90.550.10">
    <property type="entry name" value="Spore Coat Polysaccharide Biosynthesis Protein SpsA, Chain A"/>
    <property type="match status" value="1"/>
</dbReference>
<dbReference type="HAMAP" id="MF_01631">
    <property type="entry name" value="GlmU"/>
    <property type="match status" value="1"/>
</dbReference>
<dbReference type="InterPro" id="IPR005882">
    <property type="entry name" value="Bifunctional_GlmU"/>
</dbReference>
<dbReference type="InterPro" id="IPR050065">
    <property type="entry name" value="GlmU-like"/>
</dbReference>
<dbReference type="InterPro" id="IPR038009">
    <property type="entry name" value="GlmU_C_LbH"/>
</dbReference>
<dbReference type="InterPro" id="IPR001451">
    <property type="entry name" value="Hexapep"/>
</dbReference>
<dbReference type="InterPro" id="IPR005835">
    <property type="entry name" value="NTP_transferase_dom"/>
</dbReference>
<dbReference type="InterPro" id="IPR029044">
    <property type="entry name" value="Nucleotide-diphossugar_trans"/>
</dbReference>
<dbReference type="InterPro" id="IPR011004">
    <property type="entry name" value="Trimer_LpxA-like_sf"/>
</dbReference>
<dbReference type="NCBIfam" id="TIGR01173">
    <property type="entry name" value="glmU"/>
    <property type="match status" value="1"/>
</dbReference>
<dbReference type="NCBIfam" id="NF010934">
    <property type="entry name" value="PRK14354.1"/>
    <property type="match status" value="1"/>
</dbReference>
<dbReference type="PANTHER" id="PTHR43584:SF3">
    <property type="entry name" value="BIFUNCTIONAL PROTEIN GLMU"/>
    <property type="match status" value="1"/>
</dbReference>
<dbReference type="PANTHER" id="PTHR43584">
    <property type="entry name" value="NUCLEOTIDYL TRANSFERASE"/>
    <property type="match status" value="1"/>
</dbReference>
<dbReference type="Pfam" id="PF00132">
    <property type="entry name" value="Hexapep"/>
    <property type="match status" value="1"/>
</dbReference>
<dbReference type="Pfam" id="PF00483">
    <property type="entry name" value="NTP_transferase"/>
    <property type="match status" value="1"/>
</dbReference>
<dbReference type="SUPFAM" id="SSF53448">
    <property type="entry name" value="Nucleotide-diphospho-sugar transferases"/>
    <property type="match status" value="1"/>
</dbReference>
<dbReference type="SUPFAM" id="SSF51161">
    <property type="entry name" value="Trimeric LpxA-like enzymes"/>
    <property type="match status" value="1"/>
</dbReference>